<sequence length="128" mass="14548">MEIVNALGRRKTAVARVYVREGSGKILINQRSLESYFPSSILRYVVKQPLNKLGVSEQYDITINLKGGGYKGQSEAIRLGIARALIKINSKDKPLLRSEGFVTRDSRKVERKKPGRPKARKKFQFSKR</sequence>
<gene>
    <name evidence="1" type="primary">rpsI</name>
    <name type="ordered locus">CFPG_285</name>
</gene>
<accession>B6YQS6</accession>
<proteinExistence type="inferred from homology"/>
<feature type="chain" id="PRO_1000128073" description="Small ribosomal subunit protein uS9">
    <location>
        <begin position="1"/>
        <end position="128"/>
    </location>
</feature>
<feature type="region of interest" description="Disordered" evidence="2">
    <location>
        <begin position="106"/>
        <end position="128"/>
    </location>
</feature>
<feature type="compositionally biased region" description="Basic residues" evidence="2">
    <location>
        <begin position="109"/>
        <end position="128"/>
    </location>
</feature>
<name>RS9_AZOPC</name>
<protein>
    <recommendedName>
        <fullName evidence="1">Small ribosomal subunit protein uS9</fullName>
    </recommendedName>
    <alternativeName>
        <fullName evidence="3">30S ribosomal protein S9</fullName>
    </alternativeName>
</protein>
<dbReference type="EMBL" id="AP010656">
    <property type="protein sequence ID" value="BAG83548.1"/>
    <property type="molecule type" value="Genomic_DNA"/>
</dbReference>
<dbReference type="RefSeq" id="WP_012573309.1">
    <property type="nucleotide sequence ID" value="NC_011565.1"/>
</dbReference>
<dbReference type="SMR" id="B6YQS6"/>
<dbReference type="STRING" id="511995.CFPG_285"/>
<dbReference type="KEGG" id="aps:CFPG_285"/>
<dbReference type="eggNOG" id="COG0103">
    <property type="taxonomic scope" value="Bacteria"/>
</dbReference>
<dbReference type="HOGENOM" id="CLU_046483_2_1_10"/>
<dbReference type="OrthoDB" id="9803965at2"/>
<dbReference type="Proteomes" id="UP000000723">
    <property type="component" value="Chromosome"/>
</dbReference>
<dbReference type="GO" id="GO:0022627">
    <property type="term" value="C:cytosolic small ribosomal subunit"/>
    <property type="evidence" value="ECO:0007669"/>
    <property type="project" value="TreeGrafter"/>
</dbReference>
<dbReference type="GO" id="GO:0003723">
    <property type="term" value="F:RNA binding"/>
    <property type="evidence" value="ECO:0007669"/>
    <property type="project" value="TreeGrafter"/>
</dbReference>
<dbReference type="GO" id="GO:0003735">
    <property type="term" value="F:structural constituent of ribosome"/>
    <property type="evidence" value="ECO:0007669"/>
    <property type="project" value="InterPro"/>
</dbReference>
<dbReference type="GO" id="GO:0006412">
    <property type="term" value="P:translation"/>
    <property type="evidence" value="ECO:0007669"/>
    <property type="project" value="UniProtKB-UniRule"/>
</dbReference>
<dbReference type="FunFam" id="3.30.230.10:FF:000001">
    <property type="entry name" value="30S ribosomal protein S9"/>
    <property type="match status" value="1"/>
</dbReference>
<dbReference type="Gene3D" id="3.30.230.10">
    <property type="match status" value="1"/>
</dbReference>
<dbReference type="HAMAP" id="MF_00532_B">
    <property type="entry name" value="Ribosomal_uS9_B"/>
    <property type="match status" value="1"/>
</dbReference>
<dbReference type="InterPro" id="IPR020568">
    <property type="entry name" value="Ribosomal_Su5_D2-typ_SF"/>
</dbReference>
<dbReference type="InterPro" id="IPR000754">
    <property type="entry name" value="Ribosomal_uS9"/>
</dbReference>
<dbReference type="InterPro" id="IPR023035">
    <property type="entry name" value="Ribosomal_uS9_bac/plastid"/>
</dbReference>
<dbReference type="InterPro" id="IPR020574">
    <property type="entry name" value="Ribosomal_uS9_CS"/>
</dbReference>
<dbReference type="InterPro" id="IPR014721">
    <property type="entry name" value="Ribsml_uS5_D2-typ_fold_subgr"/>
</dbReference>
<dbReference type="NCBIfam" id="NF001099">
    <property type="entry name" value="PRK00132.1"/>
    <property type="match status" value="1"/>
</dbReference>
<dbReference type="PANTHER" id="PTHR21569">
    <property type="entry name" value="RIBOSOMAL PROTEIN S9"/>
    <property type="match status" value="1"/>
</dbReference>
<dbReference type="PANTHER" id="PTHR21569:SF1">
    <property type="entry name" value="SMALL RIBOSOMAL SUBUNIT PROTEIN US9M"/>
    <property type="match status" value="1"/>
</dbReference>
<dbReference type="Pfam" id="PF00380">
    <property type="entry name" value="Ribosomal_S9"/>
    <property type="match status" value="1"/>
</dbReference>
<dbReference type="SUPFAM" id="SSF54211">
    <property type="entry name" value="Ribosomal protein S5 domain 2-like"/>
    <property type="match status" value="1"/>
</dbReference>
<dbReference type="PROSITE" id="PS00360">
    <property type="entry name" value="RIBOSOMAL_S9"/>
    <property type="match status" value="1"/>
</dbReference>
<keyword id="KW-1185">Reference proteome</keyword>
<keyword id="KW-0687">Ribonucleoprotein</keyword>
<keyword id="KW-0689">Ribosomal protein</keyword>
<comment type="similarity">
    <text evidence="1">Belongs to the universal ribosomal protein uS9 family.</text>
</comment>
<organism>
    <name type="scientific">Azobacteroides pseudotrichonymphae genomovar. CFP2</name>
    <dbReference type="NCBI Taxonomy" id="511995"/>
    <lineage>
        <taxon>Bacteria</taxon>
        <taxon>Pseudomonadati</taxon>
        <taxon>Bacteroidota</taxon>
        <taxon>Bacteroidia</taxon>
        <taxon>Bacteroidales</taxon>
        <taxon>Candidatus Azobacteroides</taxon>
    </lineage>
</organism>
<evidence type="ECO:0000255" key="1">
    <source>
        <dbReference type="HAMAP-Rule" id="MF_00532"/>
    </source>
</evidence>
<evidence type="ECO:0000256" key="2">
    <source>
        <dbReference type="SAM" id="MobiDB-lite"/>
    </source>
</evidence>
<evidence type="ECO:0000305" key="3"/>
<reference key="1">
    <citation type="journal article" date="2008" name="Science">
        <title>Genome of an endosymbiont coupling N2 fixation to cellulolysis within RT protist cells in termite gut.</title>
        <authorList>
            <person name="Hongoh Y."/>
            <person name="Sharma V.K."/>
            <person name="Prakash T."/>
            <person name="Noda S."/>
            <person name="Toh H."/>
            <person name="Taylor T.D."/>
            <person name="Kudo T."/>
            <person name="Sakaki Y."/>
            <person name="Toyoda A."/>
            <person name="Hattori M."/>
            <person name="Ohkuma M."/>
        </authorList>
    </citation>
    <scope>NUCLEOTIDE SEQUENCE [LARGE SCALE GENOMIC DNA]</scope>
</reference>